<name>LRC59_CHICK</name>
<gene>
    <name type="primary">LRRC59</name>
    <name type="ORF">RCJMB04_38i14</name>
</gene>
<dbReference type="EMBL" id="AJ851816">
    <property type="protein sequence ID" value="CAH65450.1"/>
    <property type="molecule type" value="mRNA"/>
</dbReference>
<dbReference type="RefSeq" id="NP_001012588.1">
    <property type="nucleotide sequence ID" value="NM_001012570.1"/>
</dbReference>
<dbReference type="SMR" id="Q5F334"/>
<dbReference type="FunCoup" id="Q5F334">
    <property type="interactions" value="1749"/>
</dbReference>
<dbReference type="STRING" id="9031.ENSGALP00000057338"/>
<dbReference type="PaxDb" id="9031-ENSGALP00000012427"/>
<dbReference type="GeneID" id="422103"/>
<dbReference type="KEGG" id="gga:422103"/>
<dbReference type="CTD" id="55379"/>
<dbReference type="VEuPathDB" id="HostDB:geneid_422103"/>
<dbReference type="eggNOG" id="KOG0473">
    <property type="taxonomic scope" value="Eukaryota"/>
</dbReference>
<dbReference type="InParanoid" id="Q5F334"/>
<dbReference type="OrthoDB" id="1394818at2759"/>
<dbReference type="PhylomeDB" id="Q5F334"/>
<dbReference type="PRO" id="PR:Q5F334"/>
<dbReference type="Proteomes" id="UP000000539">
    <property type="component" value="Unassembled WGS sequence"/>
</dbReference>
<dbReference type="GO" id="GO:0005789">
    <property type="term" value="C:endoplasmic reticulum membrane"/>
    <property type="evidence" value="ECO:0007669"/>
    <property type="project" value="UniProtKB-SubCell"/>
</dbReference>
<dbReference type="GO" id="GO:0005635">
    <property type="term" value="C:nuclear envelope"/>
    <property type="evidence" value="ECO:0007669"/>
    <property type="project" value="UniProtKB-SubCell"/>
</dbReference>
<dbReference type="Gene3D" id="3.80.10.10">
    <property type="entry name" value="Ribonuclease Inhibitor"/>
    <property type="match status" value="1"/>
</dbReference>
<dbReference type="InterPro" id="IPR001611">
    <property type="entry name" value="Leu-rich_rpt"/>
</dbReference>
<dbReference type="InterPro" id="IPR003591">
    <property type="entry name" value="Leu-rich_rpt_typical-subtyp"/>
</dbReference>
<dbReference type="InterPro" id="IPR032675">
    <property type="entry name" value="LRR_dom_sf"/>
</dbReference>
<dbReference type="InterPro" id="IPR050216">
    <property type="entry name" value="LRR_domain-containing"/>
</dbReference>
<dbReference type="PANTHER" id="PTHR48051">
    <property type="match status" value="1"/>
</dbReference>
<dbReference type="PANTHER" id="PTHR48051:SF42">
    <property type="entry name" value="LEUCINE-RICH REPEAT-CONTAINING PROTEIN 18-LIKE"/>
    <property type="match status" value="1"/>
</dbReference>
<dbReference type="Pfam" id="PF13855">
    <property type="entry name" value="LRR_8"/>
    <property type="match status" value="1"/>
</dbReference>
<dbReference type="PRINTS" id="PR00019">
    <property type="entry name" value="LEURICHRPT"/>
</dbReference>
<dbReference type="SMART" id="SM00369">
    <property type="entry name" value="LRR_TYP"/>
    <property type="match status" value="3"/>
</dbReference>
<dbReference type="SUPFAM" id="SSF52058">
    <property type="entry name" value="L domain-like"/>
    <property type="match status" value="1"/>
</dbReference>
<feature type="chain" id="PRO_0000235162" description="Leucine-rich repeat-containing protein 59">
    <location>
        <begin position="1"/>
        <end position="339"/>
    </location>
</feature>
<feature type="topological domain" description="Cytoplasmic" evidence="2">
    <location>
        <begin position="1"/>
        <end position="282"/>
    </location>
</feature>
<feature type="transmembrane region" description="Helical" evidence="2">
    <location>
        <begin position="283"/>
        <end position="300"/>
    </location>
</feature>
<feature type="topological domain" description="Lumenal" evidence="2">
    <location>
        <begin position="301"/>
        <end position="339"/>
    </location>
</feature>
<feature type="repeat" description="LRR 1">
    <location>
        <begin position="10"/>
        <end position="31"/>
    </location>
</feature>
<feature type="repeat" description="LRR 2">
    <location>
        <begin position="40"/>
        <end position="61"/>
    </location>
</feature>
<feature type="repeat" description="LRR 3">
    <location>
        <begin position="63"/>
        <end position="84"/>
    </location>
</feature>
<feature type="repeat" description="LRR 4">
    <location>
        <begin position="86"/>
        <end position="107"/>
    </location>
</feature>
<feature type="region of interest" description="Disordered" evidence="3">
    <location>
        <begin position="186"/>
        <end position="275"/>
    </location>
</feature>
<feature type="coiled-coil region" evidence="2">
    <location>
        <begin position="181"/>
        <end position="254"/>
    </location>
</feature>
<feature type="compositionally biased region" description="Basic and acidic residues" evidence="3">
    <location>
        <begin position="187"/>
        <end position="256"/>
    </location>
</feature>
<reference key="1">
    <citation type="journal article" date="2005" name="Genome Biol.">
        <title>Full-length cDNAs from chicken bursal lymphocytes to facilitate gene function analysis.</title>
        <authorList>
            <person name="Caldwell R.B."/>
            <person name="Kierzek A.M."/>
            <person name="Arakawa H."/>
            <person name="Bezzubov Y."/>
            <person name="Zaim J."/>
            <person name="Fiedler P."/>
            <person name="Kutter S."/>
            <person name="Blagodatski A."/>
            <person name="Kostovska D."/>
            <person name="Koter M."/>
            <person name="Plachy J."/>
            <person name="Carninci P."/>
            <person name="Hayashizaki Y."/>
            <person name="Buerstedde J.-M."/>
        </authorList>
    </citation>
    <scope>NUCLEOTIDE SEQUENCE [LARGE SCALE MRNA]</scope>
    <source>
        <strain>CB</strain>
        <tissue>Bursa of Fabricius</tissue>
    </source>
</reference>
<proteinExistence type="evidence at transcript level"/>
<evidence type="ECO:0000250" key="1"/>
<evidence type="ECO:0000255" key="2"/>
<evidence type="ECO:0000256" key="3">
    <source>
        <dbReference type="SAM" id="MobiDB-lite"/>
    </source>
</evidence>
<sequence length="339" mass="38666">MARGGGKSGSLKDKLDGNELDLSLCGLSEVPVRELAALPKATVLDLSCNSLVSLPSDFCSLTHLVKLDLSKNRLQQLPVDFGRLVSLQHLDLLNNRLVTLPVSFAQLKLSLHHSPVEILSRLLGTPSSLLVFHSFHSWENQNLKWLDLKDNPLDPVLAKVAGDCLDEKQCKQAAVRVLQHMKVIQSEQDRERQRKLQAEREMEKKREAEQRAREAQERELRKREKAEEKERRRREYDAQRAAKQEMEKKTKKETVQTRKLASSSRPPQPARHKHSWSRSVLRALLLVLLCILCTLAVCKLTELQHQPLCVSVNTLYEDVVAAVQNHKTLQNMLQQNSQQ</sequence>
<keyword id="KW-0175">Coiled coil</keyword>
<keyword id="KW-0256">Endoplasmic reticulum</keyword>
<keyword id="KW-0433">Leucine-rich repeat</keyword>
<keyword id="KW-0472">Membrane</keyword>
<keyword id="KW-0492">Microsome</keyword>
<keyword id="KW-0539">Nucleus</keyword>
<keyword id="KW-1185">Reference proteome</keyword>
<keyword id="KW-0677">Repeat</keyword>
<keyword id="KW-0735">Signal-anchor</keyword>
<keyword id="KW-0812">Transmembrane</keyword>
<keyword id="KW-1133">Transmembrane helix</keyword>
<comment type="function">
    <text evidence="1">Required for nuclear import of FGF1.</text>
</comment>
<comment type="subunit">
    <text evidence="1">Interacts with SGO1.</text>
</comment>
<comment type="subcellular location">
    <subcellularLocation>
        <location evidence="1">Microsome membrane</location>
        <topology evidence="1">Single-pass type II membrane protein</topology>
    </subcellularLocation>
    <subcellularLocation>
        <location evidence="1">Endoplasmic reticulum membrane</location>
        <topology evidence="1">Single-pass type II membrane protein</topology>
    </subcellularLocation>
    <subcellularLocation>
        <location evidence="1">Nucleus envelope</location>
    </subcellularLocation>
    <text evidence="1">Localization in the nuclear envelope depends upon the nuclear import machinery.</text>
</comment>
<accession>Q5F334</accession>
<organism>
    <name type="scientific">Gallus gallus</name>
    <name type="common">Chicken</name>
    <dbReference type="NCBI Taxonomy" id="9031"/>
    <lineage>
        <taxon>Eukaryota</taxon>
        <taxon>Metazoa</taxon>
        <taxon>Chordata</taxon>
        <taxon>Craniata</taxon>
        <taxon>Vertebrata</taxon>
        <taxon>Euteleostomi</taxon>
        <taxon>Archelosauria</taxon>
        <taxon>Archosauria</taxon>
        <taxon>Dinosauria</taxon>
        <taxon>Saurischia</taxon>
        <taxon>Theropoda</taxon>
        <taxon>Coelurosauria</taxon>
        <taxon>Aves</taxon>
        <taxon>Neognathae</taxon>
        <taxon>Galloanserae</taxon>
        <taxon>Galliformes</taxon>
        <taxon>Phasianidae</taxon>
        <taxon>Phasianinae</taxon>
        <taxon>Gallus</taxon>
    </lineage>
</organism>
<protein>
    <recommendedName>
        <fullName>Leucine-rich repeat-containing protein 59</fullName>
    </recommendedName>
</protein>